<protein>
    <recommendedName>
        <fullName evidence="1">Lipoyl synthase</fullName>
        <ecNumber evidence="1">2.8.1.8</ecNumber>
    </recommendedName>
    <alternativeName>
        <fullName evidence="1">Lip-syn</fullName>
        <shortName evidence="1">LS</shortName>
    </alternativeName>
    <alternativeName>
        <fullName evidence="1">Lipoate synthase</fullName>
    </alternativeName>
    <alternativeName>
        <fullName evidence="1">Lipoic acid synthase</fullName>
    </alternativeName>
    <alternativeName>
        <fullName evidence="1">Sulfur insertion protein LipA</fullName>
    </alternativeName>
</protein>
<comment type="function">
    <text evidence="1">Catalyzes the radical-mediated insertion of two sulfur atoms into the C-6 and C-8 positions of the octanoyl moiety bound to the lipoyl domains of lipoate-dependent enzymes, thereby converting the octanoylated domains into lipoylated derivatives.</text>
</comment>
<comment type="catalytic activity">
    <reaction evidence="1">
        <text>[[Fe-S] cluster scaffold protein carrying a second [4Fe-4S](2+) cluster] + N(6)-octanoyl-L-lysyl-[protein] + 2 oxidized [2Fe-2S]-[ferredoxin] + 2 S-adenosyl-L-methionine + 4 H(+) = [[Fe-S] cluster scaffold protein] + N(6)-[(R)-dihydrolipoyl]-L-lysyl-[protein] + 4 Fe(3+) + 2 hydrogen sulfide + 2 5'-deoxyadenosine + 2 L-methionine + 2 reduced [2Fe-2S]-[ferredoxin]</text>
        <dbReference type="Rhea" id="RHEA:16585"/>
        <dbReference type="Rhea" id="RHEA-COMP:9928"/>
        <dbReference type="Rhea" id="RHEA-COMP:10000"/>
        <dbReference type="Rhea" id="RHEA-COMP:10001"/>
        <dbReference type="Rhea" id="RHEA-COMP:10475"/>
        <dbReference type="Rhea" id="RHEA-COMP:14568"/>
        <dbReference type="Rhea" id="RHEA-COMP:14569"/>
        <dbReference type="ChEBI" id="CHEBI:15378"/>
        <dbReference type="ChEBI" id="CHEBI:17319"/>
        <dbReference type="ChEBI" id="CHEBI:29034"/>
        <dbReference type="ChEBI" id="CHEBI:29919"/>
        <dbReference type="ChEBI" id="CHEBI:33722"/>
        <dbReference type="ChEBI" id="CHEBI:33737"/>
        <dbReference type="ChEBI" id="CHEBI:33738"/>
        <dbReference type="ChEBI" id="CHEBI:57844"/>
        <dbReference type="ChEBI" id="CHEBI:59789"/>
        <dbReference type="ChEBI" id="CHEBI:78809"/>
        <dbReference type="ChEBI" id="CHEBI:83100"/>
        <dbReference type="EC" id="2.8.1.8"/>
    </reaction>
</comment>
<comment type="cofactor">
    <cofactor evidence="1">
        <name>[4Fe-4S] cluster</name>
        <dbReference type="ChEBI" id="CHEBI:49883"/>
    </cofactor>
    <text evidence="1">Binds 2 [4Fe-4S] clusters per subunit. One cluster is coordinated with 3 cysteines and an exchangeable S-adenosyl-L-methionine.</text>
</comment>
<comment type="pathway">
    <text evidence="1">Protein modification; protein lipoylation via endogenous pathway; protein N(6)-(lipoyl)lysine from octanoyl-[acyl-carrier-protein]: step 2/2.</text>
</comment>
<comment type="subcellular location">
    <subcellularLocation>
        <location evidence="1">Cytoplasm</location>
    </subcellularLocation>
</comment>
<comment type="similarity">
    <text evidence="1">Belongs to the radical SAM superfamily. Lipoyl synthase family.</text>
</comment>
<sequence length="330" mass="37442">MTTATGTKPKKMEAFKMERGVKYRDAAKTSVIQVRNIDPDQELLPKPSWMKIKLPAASAKIDSIKHGMRRHGLHSVCEEASCPNLHECFNHGTATFMIMGAICTRRCPFCDVAHGKPLPLDPEEPRKVAETVQDMKLKYVVITSVDRDDLADRGAAHFAATVREIKALNPECKVEILVPDFRGRVEQAVEILKQNPPDVFNHNLENVPRLYREVRPGADYKWSLELLKIFKQEFPNIPTKSGLMVGLGETNEEILEVMQDLRDHGVTMLTIGQYLQPSRHHLKVERYVPPEEFDMFRSEAERMGFEHAACGPFVRSSYHADLQAKGELVK</sequence>
<feature type="chain" id="PRO_1000012180" description="Lipoyl synthase">
    <location>
        <begin position="1"/>
        <end position="330"/>
    </location>
</feature>
<feature type="domain" description="Radical SAM core" evidence="2">
    <location>
        <begin position="89"/>
        <end position="306"/>
    </location>
</feature>
<feature type="binding site" evidence="1">
    <location>
        <position position="77"/>
    </location>
    <ligand>
        <name>[4Fe-4S] cluster</name>
        <dbReference type="ChEBI" id="CHEBI:49883"/>
        <label>1</label>
    </ligand>
</feature>
<feature type="binding site" evidence="1">
    <location>
        <position position="82"/>
    </location>
    <ligand>
        <name>[4Fe-4S] cluster</name>
        <dbReference type="ChEBI" id="CHEBI:49883"/>
        <label>1</label>
    </ligand>
</feature>
<feature type="binding site" evidence="1">
    <location>
        <position position="88"/>
    </location>
    <ligand>
        <name>[4Fe-4S] cluster</name>
        <dbReference type="ChEBI" id="CHEBI:49883"/>
        <label>1</label>
    </ligand>
</feature>
<feature type="binding site" evidence="1">
    <location>
        <position position="103"/>
    </location>
    <ligand>
        <name>[4Fe-4S] cluster</name>
        <dbReference type="ChEBI" id="CHEBI:49883"/>
        <label>2</label>
        <note>4Fe-4S-S-AdoMet</note>
    </ligand>
</feature>
<feature type="binding site" evidence="1">
    <location>
        <position position="107"/>
    </location>
    <ligand>
        <name>[4Fe-4S] cluster</name>
        <dbReference type="ChEBI" id="CHEBI:49883"/>
        <label>2</label>
        <note>4Fe-4S-S-AdoMet</note>
    </ligand>
</feature>
<feature type="binding site" evidence="1">
    <location>
        <position position="110"/>
    </location>
    <ligand>
        <name>[4Fe-4S] cluster</name>
        <dbReference type="ChEBI" id="CHEBI:49883"/>
        <label>2</label>
        <note>4Fe-4S-S-AdoMet</note>
    </ligand>
</feature>
<feature type="binding site" evidence="1">
    <location>
        <position position="317"/>
    </location>
    <ligand>
        <name>[4Fe-4S] cluster</name>
        <dbReference type="ChEBI" id="CHEBI:49883"/>
        <label>1</label>
    </ligand>
</feature>
<evidence type="ECO:0000255" key="1">
    <source>
        <dbReference type="HAMAP-Rule" id="MF_00206"/>
    </source>
</evidence>
<evidence type="ECO:0000255" key="2">
    <source>
        <dbReference type="PROSITE-ProRule" id="PRU01266"/>
    </source>
</evidence>
<keyword id="KW-0004">4Fe-4S</keyword>
<keyword id="KW-0963">Cytoplasm</keyword>
<keyword id="KW-0408">Iron</keyword>
<keyword id="KW-0411">Iron-sulfur</keyword>
<keyword id="KW-0479">Metal-binding</keyword>
<keyword id="KW-1185">Reference proteome</keyword>
<keyword id="KW-0949">S-adenosyl-L-methionine</keyword>
<keyword id="KW-0808">Transferase</keyword>
<organism>
    <name type="scientific">Actinobacillus pleuropneumoniae serotype 5b (strain L20)</name>
    <dbReference type="NCBI Taxonomy" id="416269"/>
    <lineage>
        <taxon>Bacteria</taxon>
        <taxon>Pseudomonadati</taxon>
        <taxon>Pseudomonadota</taxon>
        <taxon>Gammaproteobacteria</taxon>
        <taxon>Pasteurellales</taxon>
        <taxon>Pasteurellaceae</taxon>
        <taxon>Actinobacillus</taxon>
    </lineage>
</organism>
<accession>A3N2P1</accession>
<proteinExistence type="inferred from homology"/>
<reference key="1">
    <citation type="journal article" date="2008" name="J. Bacteriol.">
        <title>The complete genome sequence of Actinobacillus pleuropneumoniae L20 (serotype 5b).</title>
        <authorList>
            <person name="Foote S.J."/>
            <person name="Bosse J.T."/>
            <person name="Bouevitch A.B."/>
            <person name="Langford P.R."/>
            <person name="Young N.M."/>
            <person name="Nash J.H.E."/>
        </authorList>
    </citation>
    <scope>NUCLEOTIDE SEQUENCE [LARGE SCALE GENOMIC DNA]</scope>
    <source>
        <strain>L20</strain>
    </source>
</reference>
<name>LIPA_ACTP2</name>
<dbReference type="EC" id="2.8.1.8" evidence="1"/>
<dbReference type="EMBL" id="CP000569">
    <property type="protein sequence ID" value="ABN74677.1"/>
    <property type="molecule type" value="Genomic_DNA"/>
</dbReference>
<dbReference type="RefSeq" id="WP_005598949.1">
    <property type="nucleotide sequence ID" value="NC_009053.1"/>
</dbReference>
<dbReference type="SMR" id="A3N2P1"/>
<dbReference type="STRING" id="416269.APL_1593"/>
<dbReference type="EnsemblBacteria" id="ABN74677">
    <property type="protein sequence ID" value="ABN74677"/>
    <property type="gene ID" value="APL_1593"/>
</dbReference>
<dbReference type="GeneID" id="48599879"/>
<dbReference type="KEGG" id="apl:APL_1593"/>
<dbReference type="eggNOG" id="COG0320">
    <property type="taxonomic scope" value="Bacteria"/>
</dbReference>
<dbReference type="HOGENOM" id="CLU_033144_2_1_6"/>
<dbReference type="UniPathway" id="UPA00538">
    <property type="reaction ID" value="UER00593"/>
</dbReference>
<dbReference type="Proteomes" id="UP000001432">
    <property type="component" value="Chromosome"/>
</dbReference>
<dbReference type="GO" id="GO:0005737">
    <property type="term" value="C:cytoplasm"/>
    <property type="evidence" value="ECO:0007669"/>
    <property type="project" value="UniProtKB-SubCell"/>
</dbReference>
<dbReference type="GO" id="GO:0051539">
    <property type="term" value="F:4 iron, 4 sulfur cluster binding"/>
    <property type="evidence" value="ECO:0007669"/>
    <property type="project" value="UniProtKB-UniRule"/>
</dbReference>
<dbReference type="GO" id="GO:0016992">
    <property type="term" value="F:lipoate synthase activity"/>
    <property type="evidence" value="ECO:0007669"/>
    <property type="project" value="UniProtKB-UniRule"/>
</dbReference>
<dbReference type="GO" id="GO:0046872">
    <property type="term" value="F:metal ion binding"/>
    <property type="evidence" value="ECO:0007669"/>
    <property type="project" value="UniProtKB-KW"/>
</dbReference>
<dbReference type="CDD" id="cd01335">
    <property type="entry name" value="Radical_SAM"/>
    <property type="match status" value="1"/>
</dbReference>
<dbReference type="FunFam" id="3.20.20.70:FF:000023">
    <property type="entry name" value="Lipoyl synthase"/>
    <property type="match status" value="1"/>
</dbReference>
<dbReference type="Gene3D" id="3.20.20.70">
    <property type="entry name" value="Aldolase class I"/>
    <property type="match status" value="1"/>
</dbReference>
<dbReference type="HAMAP" id="MF_00206">
    <property type="entry name" value="Lipoyl_synth"/>
    <property type="match status" value="1"/>
</dbReference>
<dbReference type="InterPro" id="IPR013785">
    <property type="entry name" value="Aldolase_TIM"/>
</dbReference>
<dbReference type="InterPro" id="IPR006638">
    <property type="entry name" value="Elp3/MiaA/NifB-like_rSAM"/>
</dbReference>
<dbReference type="InterPro" id="IPR003698">
    <property type="entry name" value="Lipoyl_synth"/>
</dbReference>
<dbReference type="InterPro" id="IPR007197">
    <property type="entry name" value="rSAM"/>
</dbReference>
<dbReference type="NCBIfam" id="TIGR00510">
    <property type="entry name" value="lipA"/>
    <property type="match status" value="1"/>
</dbReference>
<dbReference type="NCBIfam" id="NF004019">
    <property type="entry name" value="PRK05481.1"/>
    <property type="match status" value="1"/>
</dbReference>
<dbReference type="NCBIfam" id="NF009544">
    <property type="entry name" value="PRK12928.1"/>
    <property type="match status" value="1"/>
</dbReference>
<dbReference type="PANTHER" id="PTHR10949">
    <property type="entry name" value="LIPOYL SYNTHASE"/>
    <property type="match status" value="1"/>
</dbReference>
<dbReference type="PANTHER" id="PTHR10949:SF0">
    <property type="entry name" value="LIPOYL SYNTHASE, MITOCHONDRIAL"/>
    <property type="match status" value="1"/>
</dbReference>
<dbReference type="Pfam" id="PF04055">
    <property type="entry name" value="Radical_SAM"/>
    <property type="match status" value="1"/>
</dbReference>
<dbReference type="PIRSF" id="PIRSF005963">
    <property type="entry name" value="Lipoyl_synth"/>
    <property type="match status" value="1"/>
</dbReference>
<dbReference type="SFLD" id="SFLDF00271">
    <property type="entry name" value="lipoyl_synthase"/>
    <property type="match status" value="1"/>
</dbReference>
<dbReference type="SFLD" id="SFLDS00029">
    <property type="entry name" value="Radical_SAM"/>
    <property type="match status" value="1"/>
</dbReference>
<dbReference type="SMART" id="SM00729">
    <property type="entry name" value="Elp3"/>
    <property type="match status" value="1"/>
</dbReference>
<dbReference type="SUPFAM" id="SSF102114">
    <property type="entry name" value="Radical SAM enzymes"/>
    <property type="match status" value="1"/>
</dbReference>
<dbReference type="PROSITE" id="PS51918">
    <property type="entry name" value="RADICAL_SAM"/>
    <property type="match status" value="1"/>
</dbReference>
<gene>
    <name evidence="1" type="primary">lipA</name>
    <name type="ordered locus">APL_1593</name>
</gene>